<sequence>MLNPLQVLQELNESSSFLQPLAFTLLAIFLVLLYTWYSSTKTTTQKSTQPPSPPKLPIIGNLHQIGSYPHRSLQALSQRHGPLMLLHFGSVPVLVVSSAEAAREILKTHDLTFSDRPKSTIFEKLLYNYKDVASAPYGEYWRQVRSICVLNLLSNRRVRSFRSVREEETKSMIRNIKGSSSSVLNLSEMFVRLTNDVVCKVALGRKYSDGEGGESGRMFKEILGEFGDLLGTVNIGDYVPWLSWLSHVNGLGAKLDKVAKQLDDFIDTVVQEHMNHSSRSGDDDQKDFLDILLAIQKETSAGIPIDGVSVKGIILDMFAAGTDTTYSALEWAMTELLRHPRVMNKLQNEVRGIVGNRTDVITEDDLVEMHYLKAVTKETLRLHPPIPLLVPRMSTRDVEVNGYNIKANTQVFISAWQIGRDPKLYDKPEEFEPERFLNNGIDYKGNDFELIPFGAGRRVCPGIQFAMAVNEIALANIVHKFDWALPDEASGEDLDMTETTGLTAHKKYPLKAVAFPHF</sequence>
<accession>A0A068Q6L2</accession>
<dbReference type="EC" id="1.14.-.-" evidence="6"/>
<dbReference type="EMBL" id="AB920491">
    <property type="protein sequence ID" value="BAP15887.1"/>
    <property type="molecule type" value="mRNA"/>
</dbReference>
<dbReference type="RefSeq" id="NP_001313443.1">
    <property type="nucleotide sequence ID" value="NM_001326514.1"/>
</dbReference>
<dbReference type="SMR" id="A0A068Q6L2"/>
<dbReference type="GlyCosmos" id="A0A068Q6L2">
    <property type="glycosylation" value="4 sites, No reported glycans"/>
</dbReference>
<dbReference type="GeneID" id="103338182"/>
<dbReference type="Proteomes" id="UP000694861">
    <property type="component" value="Unplaced"/>
</dbReference>
<dbReference type="GO" id="GO:0016020">
    <property type="term" value="C:membrane"/>
    <property type="evidence" value="ECO:0007669"/>
    <property type="project" value="UniProtKB-SubCell"/>
</dbReference>
<dbReference type="GO" id="GO:0020037">
    <property type="term" value="F:heme binding"/>
    <property type="evidence" value="ECO:0007669"/>
    <property type="project" value="InterPro"/>
</dbReference>
<dbReference type="GO" id="GO:0005506">
    <property type="term" value="F:iron ion binding"/>
    <property type="evidence" value="ECO:0007669"/>
    <property type="project" value="InterPro"/>
</dbReference>
<dbReference type="GO" id="GO:0004497">
    <property type="term" value="F:monooxygenase activity"/>
    <property type="evidence" value="ECO:0007669"/>
    <property type="project" value="UniProtKB-KW"/>
</dbReference>
<dbReference type="GO" id="GO:0016705">
    <property type="term" value="F:oxidoreductase activity, acting on paired donors, with incorporation or reduction of molecular oxygen"/>
    <property type="evidence" value="ECO:0007669"/>
    <property type="project" value="InterPro"/>
</dbReference>
<dbReference type="CDD" id="cd11072">
    <property type="entry name" value="CYP71-like"/>
    <property type="match status" value="1"/>
</dbReference>
<dbReference type="FunFam" id="1.10.630.10:FF:000011">
    <property type="entry name" value="Cytochrome P450 83B1"/>
    <property type="match status" value="1"/>
</dbReference>
<dbReference type="Gene3D" id="1.10.630.10">
    <property type="entry name" value="Cytochrome P450"/>
    <property type="match status" value="1"/>
</dbReference>
<dbReference type="InterPro" id="IPR001128">
    <property type="entry name" value="Cyt_P450"/>
</dbReference>
<dbReference type="InterPro" id="IPR017972">
    <property type="entry name" value="Cyt_P450_CS"/>
</dbReference>
<dbReference type="InterPro" id="IPR002401">
    <property type="entry name" value="Cyt_P450_E_grp-I"/>
</dbReference>
<dbReference type="InterPro" id="IPR036396">
    <property type="entry name" value="Cyt_P450_sf"/>
</dbReference>
<dbReference type="PANTHER" id="PTHR47955:SF15">
    <property type="entry name" value="CYTOCHROME P450 71A2-LIKE"/>
    <property type="match status" value="1"/>
</dbReference>
<dbReference type="PANTHER" id="PTHR47955">
    <property type="entry name" value="CYTOCHROME P450 FAMILY 71 PROTEIN"/>
    <property type="match status" value="1"/>
</dbReference>
<dbReference type="Pfam" id="PF00067">
    <property type="entry name" value="p450"/>
    <property type="match status" value="1"/>
</dbReference>
<dbReference type="PRINTS" id="PR00463">
    <property type="entry name" value="EP450I"/>
</dbReference>
<dbReference type="PRINTS" id="PR00385">
    <property type="entry name" value="P450"/>
</dbReference>
<dbReference type="SUPFAM" id="SSF48264">
    <property type="entry name" value="Cytochrome P450"/>
    <property type="match status" value="1"/>
</dbReference>
<dbReference type="PROSITE" id="PS00086">
    <property type="entry name" value="CYTOCHROME_P450"/>
    <property type="match status" value="1"/>
</dbReference>
<organism>
    <name type="scientific">Prunus mume</name>
    <name type="common">Japanese apricot</name>
    <name type="synonym">Armeniaca mume</name>
    <dbReference type="NCBI Taxonomy" id="102107"/>
    <lineage>
        <taxon>Eukaryota</taxon>
        <taxon>Viridiplantae</taxon>
        <taxon>Streptophyta</taxon>
        <taxon>Embryophyta</taxon>
        <taxon>Tracheophyta</taxon>
        <taxon>Spermatophyta</taxon>
        <taxon>Magnoliopsida</taxon>
        <taxon>eudicotyledons</taxon>
        <taxon>Gunneridae</taxon>
        <taxon>Pentapetalae</taxon>
        <taxon>rosids</taxon>
        <taxon>fabids</taxon>
        <taxon>Rosales</taxon>
        <taxon>Rosaceae</taxon>
        <taxon>Amygdaloideae</taxon>
        <taxon>Amygdaleae</taxon>
        <taxon>Prunus</taxon>
    </lineage>
</organism>
<evidence type="ECO:0000250" key="1">
    <source>
        <dbReference type="UniProtKB" id="P04798"/>
    </source>
</evidence>
<evidence type="ECO:0000255" key="2"/>
<evidence type="ECO:0000255" key="3">
    <source>
        <dbReference type="PROSITE-ProRule" id="PRU00498"/>
    </source>
</evidence>
<evidence type="ECO:0000269" key="4">
    <source>
    </source>
</evidence>
<evidence type="ECO:0000303" key="5">
    <source>
    </source>
</evidence>
<evidence type="ECO:0000305" key="6"/>
<feature type="chain" id="PRO_0000449233" description="Cytochrome P450 736A117">
    <location>
        <begin position="1"/>
        <end position="518"/>
    </location>
</feature>
<feature type="transmembrane region" description="Helical" evidence="2">
    <location>
        <begin position="17"/>
        <end position="37"/>
    </location>
</feature>
<feature type="binding site" description="axial binding residue" evidence="1">
    <location>
        <position position="460"/>
    </location>
    <ligand>
        <name>heme</name>
        <dbReference type="ChEBI" id="CHEBI:30413"/>
    </ligand>
    <ligandPart>
        <name>Fe</name>
        <dbReference type="ChEBI" id="CHEBI:18248"/>
    </ligandPart>
</feature>
<feature type="glycosylation site" description="N-linked (GlcNAc...) asparagine" evidence="3">
    <location>
        <position position="12"/>
    </location>
</feature>
<feature type="glycosylation site" description="N-linked (GlcNAc...) asparagine" evidence="3">
    <location>
        <position position="185"/>
    </location>
</feature>
<feature type="glycosylation site" description="N-linked (GlcNAc...) asparagine" evidence="3">
    <location>
        <position position="275"/>
    </location>
</feature>
<feature type="glycosylation site" description="N-linked (GlcNAc...) asparagine" evidence="3">
    <location>
        <position position="356"/>
    </location>
</feature>
<protein>
    <recommendedName>
        <fullName evidence="5">Cytochrome P450 736A117</fullName>
        <ecNumber evidence="6">1.14.-.-</ecNumber>
    </recommendedName>
</protein>
<comment type="cofactor">
    <cofactor evidence="1">
        <name>heme</name>
        <dbReference type="ChEBI" id="CHEBI:30413"/>
    </cofactor>
</comment>
<comment type="subcellular location">
    <subcellularLocation>
        <location evidence="2">Membrane</location>
        <topology evidence="2">Single-pass membrane protein</topology>
    </subcellularLocation>
</comment>
<comment type="tissue specificity">
    <text evidence="4">Expressed at similar levels in fruit kernel, seedlings, leaves, stems and buds.</text>
</comment>
<comment type="similarity">
    <text evidence="6">Belongs to the cytochrome P450 family.</text>
</comment>
<proteinExistence type="evidence at transcript level"/>
<reference key="1">
    <citation type="journal article" date="2014" name="Plant Mol. Biol.">
        <title>Identification and characterization of CYP79D16 and CYP71AN24 catalyzing the first and second steps in L-phenylalanine-derived cyanogenic glycoside biosynthesis in the Japanese apricot, Prunus mume Sieb. et Zucc.</title>
        <authorList>
            <person name="Yamaguchi T."/>
            <person name="Yamamoto K."/>
            <person name="Asano Y."/>
        </authorList>
    </citation>
    <scope>NUCLEOTIDE SEQUENCE [MRNA]</scope>
    <scope>TISSUE SPECIFICITY</scope>
    <source>
        <strain>cv. Nanko</strain>
        <tissue>Seedling</tissue>
    </source>
</reference>
<keyword id="KW-0325">Glycoprotein</keyword>
<keyword id="KW-0349">Heme</keyword>
<keyword id="KW-0408">Iron</keyword>
<keyword id="KW-0472">Membrane</keyword>
<keyword id="KW-0479">Metal-binding</keyword>
<keyword id="KW-0503">Monooxygenase</keyword>
<keyword id="KW-0560">Oxidoreductase</keyword>
<keyword id="KW-0812">Transmembrane</keyword>
<keyword id="KW-1133">Transmembrane helix</keyword>
<gene>
    <name evidence="5" type="primary">CYP736A117</name>
</gene>
<name>C7317_PRUMU</name>